<comment type="function">
    <text evidence="1">Non-catalytic component of the 20S core proteasome complex involved in the proteolytic degradation of most intracellular proteins. This complex plays numerous essential roles within the cell by associating with different regulatory particles. Associated with two 19S regulatory particles, forms the 26S proteasome and thus participates in the ATP-dependent degradation of ubiquitinated proteins. The 26S proteasome plays a key role in the maintenance of protein homeostasis by removing misfolded or damaged proteins that could impair cellular functions, and by removing proteins whose functions are no longer required. Associated with the PA200 or PA28, the 20S proteasome mediates ubiquitin-independent protein degradation. This type of proteolysis is required in several pathways including spermatogenesis (20S-PA200 complex) or generation of a subset of MHC class I-presented antigenic peptides (20S-PA28 complex).</text>
</comment>
<comment type="subunit">
    <text evidence="3">The 26S proteasome consists of a 20S proteasome core and two 19S regulatory subunits. The 20S proteasome core is a barrel-shaped complex made of 28 subunits that are arranged in four stacked rings. The two outer rings are each formed by seven alpha subunits, and the two inner rings are formed by seven beta subunits. The proteolytic activity is exerted by three beta-subunits PSMB5, PSMB6 and PSMB7.</text>
</comment>
<comment type="subcellular location">
    <subcellularLocation>
        <location evidence="1">Cytoplasm</location>
    </subcellularLocation>
    <subcellularLocation>
        <location evidence="1">Nucleus</location>
    </subcellularLocation>
    <text evidence="1">Translocated from the cytoplasm into the nucleus following interaction with AKIRIN2, which bridges the proteasome with the nuclear import receptor IPO9.</text>
</comment>
<comment type="similarity">
    <text evidence="2">Belongs to the peptidase T1B family.</text>
</comment>
<sequence length="205" mass="22993">MSIMSYNGGAVMAMKGKNCVAIAADRRFGIQAQMVTTDFQKIFPMGDRLYIGLAGLATDVQTVAQRLKFRLNLYELKEGRQIKPYTLMSMVANLLYEKRFGPYYTEPVIAGLDPKTFKPFICSLDLIGCPMVTDDFVVSGTCTEQMYGMCESLWEPNMDPEHLFETISQAMLNAVDRDAVSGMGVIVHIIEKDKITTRTLKARMD</sequence>
<reference key="1">
    <citation type="submission" date="2005-08" db="EMBL/GenBank/DDBJ databases">
        <authorList>
            <consortium name="NIH - Mammalian Gene Collection (MGC) project"/>
        </authorList>
    </citation>
    <scope>NUCLEOTIDE SEQUENCE [LARGE SCALE MRNA]</scope>
    <source>
        <strain>Hereford</strain>
        <tissue>Testis</tissue>
    </source>
</reference>
<reference key="2">
    <citation type="journal article" date="1992" name="Biochemistry">
        <title>Identification and localization of a cysteinyl residue critical for the trypsin-like catalytic activity of the proteasome.</title>
        <authorList>
            <person name="Dick L.R."/>
            <person name="Moomaw C.R."/>
            <person name="Pramanik B.C."/>
            <person name="DeMartino G.N."/>
            <person name="Slaughter C.A."/>
        </authorList>
    </citation>
    <scope>PROTEIN SEQUENCE OF 14-79; 89-114; 121-141; 160-170 AND 183-205</scope>
</reference>
<reference key="3">
    <citation type="journal article" date="2002" name="Structure">
        <title>The structure of the mammalian 20S proteasome at 2.75 A resolution.</title>
        <authorList>
            <person name="Unno M."/>
            <person name="Mizushima T."/>
            <person name="Morimoto Y."/>
            <person name="Tomisugi Y."/>
            <person name="Tanaka K."/>
            <person name="Yasuoka N."/>
            <person name="Tsukihara T."/>
        </authorList>
    </citation>
    <scope>X-RAY CRYSTALLOGRAPHY (2.75 ANGSTROMS) OF COMPLEX WITH 20S PROTEASOME</scope>
</reference>
<feature type="initiator methionine" description="Removed" evidence="1">
    <location>
        <position position="1"/>
    </location>
</feature>
<feature type="chain" id="PRO_0000148056" description="Proteasome subunit beta type-3">
    <location>
        <begin position="2"/>
        <end position="205"/>
    </location>
</feature>
<feature type="modified residue" description="N-acetylserine" evidence="1">
    <location>
        <position position="2"/>
    </location>
</feature>
<feature type="modified residue" description="N6-acetyllysine" evidence="1">
    <location>
        <position position="77"/>
    </location>
</feature>
<feature type="sequence conflict" description="In Ref. 2; AA sequence." evidence="4" ref="2">
    <original>S</original>
    <variation>C</variation>
    <location>
        <position position="89"/>
    </location>
</feature>
<feature type="strand" evidence="6">
    <location>
        <begin position="10"/>
        <end position="15"/>
    </location>
</feature>
<feature type="strand" evidence="6">
    <location>
        <begin position="20"/>
        <end position="25"/>
    </location>
</feature>
<feature type="strand" evidence="6">
    <location>
        <begin position="28"/>
        <end position="30"/>
    </location>
</feature>
<feature type="strand" evidence="6">
    <location>
        <begin position="33"/>
        <end position="37"/>
    </location>
</feature>
<feature type="strand" evidence="6">
    <location>
        <begin position="42"/>
        <end position="44"/>
    </location>
</feature>
<feature type="strand" evidence="6">
    <location>
        <begin position="49"/>
        <end position="55"/>
    </location>
</feature>
<feature type="helix" evidence="6">
    <location>
        <begin position="57"/>
        <end position="77"/>
    </location>
</feature>
<feature type="strand" evidence="6">
    <location>
        <begin position="78"/>
        <end position="80"/>
    </location>
</feature>
<feature type="helix" evidence="6">
    <location>
        <begin position="84"/>
        <end position="96"/>
    </location>
</feature>
<feature type="strand" evidence="6">
    <location>
        <begin position="99"/>
        <end position="101"/>
    </location>
</feature>
<feature type="strand" evidence="6">
    <location>
        <begin position="104"/>
        <end position="112"/>
    </location>
</feature>
<feature type="turn" evidence="6">
    <location>
        <begin position="114"/>
        <end position="116"/>
    </location>
</feature>
<feature type="strand" evidence="6">
    <location>
        <begin position="119"/>
        <end position="124"/>
    </location>
</feature>
<feature type="strand" evidence="6">
    <location>
        <begin position="130"/>
        <end position="141"/>
    </location>
</feature>
<feature type="helix" evidence="6">
    <location>
        <begin position="143"/>
        <end position="153"/>
    </location>
</feature>
<feature type="helix" evidence="6">
    <location>
        <begin position="160"/>
        <end position="175"/>
    </location>
</feature>
<feature type="strand" evidence="5">
    <location>
        <begin position="178"/>
        <end position="180"/>
    </location>
</feature>
<feature type="strand" evidence="6">
    <location>
        <begin position="185"/>
        <end position="190"/>
    </location>
</feature>
<feature type="strand" evidence="6">
    <location>
        <begin position="192"/>
        <end position="200"/>
    </location>
</feature>
<accession>P33672</accession>
<accession>Q3T059</accession>
<evidence type="ECO:0000250" key="1">
    <source>
        <dbReference type="UniProtKB" id="P49720"/>
    </source>
</evidence>
<evidence type="ECO:0000255" key="2">
    <source>
        <dbReference type="PROSITE-ProRule" id="PRU00809"/>
    </source>
</evidence>
<evidence type="ECO:0000269" key="3">
    <source>
    </source>
</evidence>
<evidence type="ECO:0000305" key="4"/>
<evidence type="ECO:0007829" key="5">
    <source>
        <dbReference type="PDB" id="7DR7"/>
    </source>
</evidence>
<evidence type="ECO:0007829" key="6">
    <source>
        <dbReference type="PDB" id="8FZ5"/>
    </source>
</evidence>
<proteinExistence type="evidence at protein level"/>
<organism>
    <name type="scientific">Bos taurus</name>
    <name type="common">Bovine</name>
    <dbReference type="NCBI Taxonomy" id="9913"/>
    <lineage>
        <taxon>Eukaryota</taxon>
        <taxon>Metazoa</taxon>
        <taxon>Chordata</taxon>
        <taxon>Craniata</taxon>
        <taxon>Vertebrata</taxon>
        <taxon>Euteleostomi</taxon>
        <taxon>Mammalia</taxon>
        <taxon>Eutheria</taxon>
        <taxon>Laurasiatheria</taxon>
        <taxon>Artiodactyla</taxon>
        <taxon>Ruminantia</taxon>
        <taxon>Pecora</taxon>
        <taxon>Bovidae</taxon>
        <taxon>Bovinae</taxon>
        <taxon>Bos</taxon>
    </lineage>
</organism>
<keyword id="KW-0002">3D-structure</keyword>
<keyword id="KW-0007">Acetylation</keyword>
<keyword id="KW-0963">Cytoplasm</keyword>
<keyword id="KW-0903">Direct protein sequencing</keyword>
<keyword id="KW-0539">Nucleus</keyword>
<keyword id="KW-0647">Proteasome</keyword>
<keyword id="KW-1185">Reference proteome</keyword>
<protein>
    <recommendedName>
        <fullName>Proteasome subunit beta type-3</fullName>
    </recommendedName>
    <alternativeName>
        <fullName>Proteasome chain 13</fullName>
    </alternativeName>
    <alternativeName>
        <fullName>Proteasome component C10-II</fullName>
    </alternativeName>
    <alternativeName>
        <fullName>Proteasome theta chain</fullName>
    </alternativeName>
</protein>
<name>PSB3_BOVIN</name>
<dbReference type="EMBL" id="BC102554">
    <property type="protein sequence ID" value="AAI02555.1"/>
    <property type="molecule type" value="mRNA"/>
</dbReference>
<dbReference type="PIR" id="A42762">
    <property type="entry name" value="A42762"/>
</dbReference>
<dbReference type="PIR" id="B42762">
    <property type="entry name" value="B42762"/>
</dbReference>
<dbReference type="PIR" id="C42762">
    <property type="entry name" value="C42762"/>
</dbReference>
<dbReference type="PIR" id="D42762">
    <property type="entry name" value="D42762"/>
</dbReference>
<dbReference type="PIR" id="G42762">
    <property type="entry name" value="G42762"/>
</dbReference>
<dbReference type="RefSeq" id="NP_001029768.1">
    <property type="nucleotide sequence ID" value="NM_001034596.2"/>
</dbReference>
<dbReference type="PDB" id="1IRU">
    <property type="method" value="X-ray"/>
    <property type="resolution" value="2.75 A"/>
    <property type="chains" value="J/X=1-205"/>
</dbReference>
<dbReference type="PDB" id="7DR6">
    <property type="method" value="EM"/>
    <property type="resolution" value="4.10 A"/>
    <property type="chains" value="H/S=1-205"/>
</dbReference>
<dbReference type="PDB" id="7DR7">
    <property type="method" value="EM"/>
    <property type="resolution" value="3.30 A"/>
    <property type="chains" value="H/S=1-205"/>
</dbReference>
<dbReference type="PDB" id="7DRW">
    <property type="method" value="EM"/>
    <property type="resolution" value="4.20 A"/>
    <property type="chains" value="S/k=1-205"/>
</dbReference>
<dbReference type="PDB" id="8AZK">
    <property type="method" value="EM"/>
    <property type="resolution" value="3.10 A"/>
    <property type="chains" value="J/X=1-205"/>
</dbReference>
<dbReference type="PDB" id="8FZ5">
    <property type="method" value="EM"/>
    <property type="resolution" value="2.23 A"/>
    <property type="chains" value="J/X=1-205"/>
</dbReference>
<dbReference type="PDB" id="8FZ6">
    <property type="method" value="EM"/>
    <property type="resolution" value="2.54 A"/>
    <property type="chains" value="J/X=1-205"/>
</dbReference>
<dbReference type="PDBsum" id="1IRU"/>
<dbReference type="PDBsum" id="7DR6"/>
<dbReference type="PDBsum" id="7DR7"/>
<dbReference type="PDBsum" id="7DRW"/>
<dbReference type="PDBsum" id="8AZK"/>
<dbReference type="PDBsum" id="8FZ5"/>
<dbReference type="PDBsum" id="8FZ6"/>
<dbReference type="EMDB" id="EMD-15767"/>
<dbReference type="EMDB" id="EMD-29603"/>
<dbReference type="EMDB" id="EMD-29604"/>
<dbReference type="EMDB" id="EMD-30824"/>
<dbReference type="EMDB" id="EMD-30825"/>
<dbReference type="EMDB" id="EMD-30828"/>
<dbReference type="SMR" id="P33672"/>
<dbReference type="FunCoup" id="P33672">
    <property type="interactions" value="3679"/>
</dbReference>
<dbReference type="STRING" id="9913.ENSBTAP00000004984"/>
<dbReference type="MEROPS" id="T01.983"/>
<dbReference type="PaxDb" id="9913-ENSBTAP00000004984"/>
<dbReference type="PeptideAtlas" id="P33672"/>
<dbReference type="Ensembl" id="ENSBTAT00000004984.4">
    <property type="protein sequence ID" value="ENSBTAP00000004984.2"/>
    <property type="gene ID" value="ENSBTAG00000003830.4"/>
</dbReference>
<dbReference type="Ensembl" id="ENSBTAT00000073382.2">
    <property type="protein sequence ID" value="ENSBTAP00000061900.1"/>
    <property type="gene ID" value="ENSBTAG00000003830.4"/>
</dbReference>
<dbReference type="GeneID" id="533874"/>
<dbReference type="KEGG" id="bta:533874"/>
<dbReference type="CTD" id="5691"/>
<dbReference type="VEuPathDB" id="HostDB:ENSBTAG00000003830"/>
<dbReference type="VGNC" id="VGNC:33447">
    <property type="gene designation" value="PSMB3"/>
</dbReference>
<dbReference type="eggNOG" id="KOG0180">
    <property type="taxonomic scope" value="Eukaryota"/>
</dbReference>
<dbReference type="GeneTree" id="ENSGT00550000074820"/>
<dbReference type="HOGENOM" id="CLU_035750_10_0_1"/>
<dbReference type="InParanoid" id="P33672"/>
<dbReference type="OMA" id="CSEQLYG"/>
<dbReference type="OrthoDB" id="204949at2759"/>
<dbReference type="TreeFam" id="TF106216"/>
<dbReference type="Reactome" id="R-BTA-1169091">
    <property type="pathway name" value="Activation of NF-kappaB in B cells"/>
</dbReference>
<dbReference type="Reactome" id="R-BTA-1234176">
    <property type="pathway name" value="Oxygen-dependent proline hydroxylation of Hypoxia-inducible Factor Alpha"/>
</dbReference>
<dbReference type="Reactome" id="R-BTA-1236978">
    <property type="pathway name" value="Cross-presentation of soluble exogenous antigens (endosomes)"/>
</dbReference>
<dbReference type="Reactome" id="R-BTA-174084">
    <property type="pathway name" value="Autodegradation of Cdh1 by Cdh1:APC/C"/>
</dbReference>
<dbReference type="Reactome" id="R-BTA-174154">
    <property type="pathway name" value="APC/C:Cdc20 mediated degradation of Securin"/>
</dbReference>
<dbReference type="Reactome" id="R-BTA-174178">
    <property type="pathway name" value="APC/C:Cdh1 mediated degradation of Cdc20 and other APC/C:Cdh1 targeted proteins in late mitosis/early G1"/>
</dbReference>
<dbReference type="Reactome" id="R-BTA-174184">
    <property type="pathway name" value="Cdc20:Phospho-APC/C mediated degradation of Cyclin A"/>
</dbReference>
<dbReference type="Reactome" id="R-BTA-187577">
    <property type="pathway name" value="SCF(Skp2)-mediated degradation of p27/p21"/>
</dbReference>
<dbReference type="Reactome" id="R-BTA-195253">
    <property type="pathway name" value="Degradation of beta-catenin by the destruction complex"/>
</dbReference>
<dbReference type="Reactome" id="R-BTA-202424">
    <property type="pathway name" value="Downstream TCR signaling"/>
</dbReference>
<dbReference type="Reactome" id="R-BTA-2467813">
    <property type="pathway name" value="Separation of Sister Chromatids"/>
</dbReference>
<dbReference type="Reactome" id="R-BTA-2871837">
    <property type="pathway name" value="FCERI mediated NF-kB activation"/>
</dbReference>
<dbReference type="Reactome" id="R-BTA-349425">
    <property type="pathway name" value="Autodegradation of the E3 ubiquitin ligase COP1"/>
</dbReference>
<dbReference type="Reactome" id="R-BTA-350562">
    <property type="pathway name" value="Regulation of ornithine decarboxylase (ODC)"/>
</dbReference>
<dbReference type="Reactome" id="R-BTA-382556">
    <property type="pathway name" value="ABC-family proteins mediated transport"/>
</dbReference>
<dbReference type="Reactome" id="R-BTA-450408">
    <property type="pathway name" value="AUF1 (hnRNP D0) binds and destabilizes mRNA"/>
</dbReference>
<dbReference type="Reactome" id="R-BTA-4608870">
    <property type="pathway name" value="Asymmetric localization of PCP proteins"/>
</dbReference>
<dbReference type="Reactome" id="R-BTA-4641257">
    <property type="pathway name" value="Degradation of AXIN"/>
</dbReference>
<dbReference type="Reactome" id="R-BTA-4641258">
    <property type="pathway name" value="Degradation of DVL"/>
</dbReference>
<dbReference type="Reactome" id="R-BTA-5358346">
    <property type="pathway name" value="Hedgehog ligand biogenesis"/>
</dbReference>
<dbReference type="Reactome" id="R-BTA-5607761">
    <property type="pathway name" value="Dectin-1 mediated noncanonical NF-kB signaling"/>
</dbReference>
<dbReference type="Reactome" id="R-BTA-5607764">
    <property type="pathway name" value="CLEC7A (Dectin-1) signaling"/>
</dbReference>
<dbReference type="Reactome" id="R-BTA-5610780">
    <property type="pathway name" value="Degradation of GLI1 by the proteasome"/>
</dbReference>
<dbReference type="Reactome" id="R-BTA-5610785">
    <property type="pathway name" value="GLI3 is processed to GLI3R by the proteasome"/>
</dbReference>
<dbReference type="Reactome" id="R-BTA-5632684">
    <property type="pathway name" value="Hedgehog 'on' state"/>
</dbReference>
<dbReference type="Reactome" id="R-BTA-5668541">
    <property type="pathway name" value="TNFR2 non-canonical NF-kB pathway"/>
</dbReference>
<dbReference type="Reactome" id="R-BTA-5676590">
    <property type="pathway name" value="NIK--&gt;noncanonical NF-kB signaling"/>
</dbReference>
<dbReference type="Reactome" id="R-BTA-5687128">
    <property type="pathway name" value="MAPK6/MAPK4 signaling"/>
</dbReference>
<dbReference type="Reactome" id="R-BTA-5689603">
    <property type="pathway name" value="UCH proteinases"/>
</dbReference>
<dbReference type="Reactome" id="R-BTA-5689880">
    <property type="pathway name" value="Ub-specific processing proteases"/>
</dbReference>
<dbReference type="Reactome" id="R-BTA-68867">
    <property type="pathway name" value="Assembly of the pre-replicative complex"/>
</dbReference>
<dbReference type="Reactome" id="R-BTA-68949">
    <property type="pathway name" value="Orc1 removal from chromatin"/>
</dbReference>
<dbReference type="Reactome" id="R-BTA-69017">
    <property type="pathway name" value="CDK-mediated phosphorylation and removal of Cdc6"/>
</dbReference>
<dbReference type="Reactome" id="R-BTA-69481">
    <property type="pathway name" value="G2/M Checkpoints"/>
</dbReference>
<dbReference type="Reactome" id="R-BTA-69601">
    <property type="pathway name" value="Ubiquitin Mediated Degradation of Phosphorylated Cdc25A"/>
</dbReference>
<dbReference type="Reactome" id="R-BTA-75815">
    <property type="pathway name" value="Ubiquitin-dependent degradation of Cyclin D"/>
</dbReference>
<dbReference type="Reactome" id="R-BTA-8852276">
    <property type="pathway name" value="The role of GTSE1 in G2/M progression after G2 checkpoint"/>
</dbReference>
<dbReference type="Reactome" id="R-BTA-8854050">
    <property type="pathway name" value="FBXL7 down-regulates AURKA during mitotic entry and in early mitosis"/>
</dbReference>
<dbReference type="Reactome" id="R-BTA-8939236">
    <property type="pathway name" value="RUNX1 regulates transcription of genes involved in differentiation of HSCs"/>
</dbReference>
<dbReference type="Reactome" id="R-BTA-8939902">
    <property type="pathway name" value="Regulation of RUNX2 expression and activity"/>
</dbReference>
<dbReference type="Reactome" id="R-BTA-8941858">
    <property type="pathway name" value="Regulation of RUNX3 expression and activity"/>
</dbReference>
<dbReference type="Reactome" id="R-BTA-8948751">
    <property type="pathway name" value="Regulation of PTEN stability and activity"/>
</dbReference>
<dbReference type="Reactome" id="R-BTA-8951664">
    <property type="pathway name" value="Neddylation"/>
</dbReference>
<dbReference type="Reactome" id="R-BTA-9020702">
    <property type="pathway name" value="Interleukin-1 signaling"/>
</dbReference>
<dbReference type="Reactome" id="R-BTA-9755511">
    <property type="pathway name" value="KEAP1-NFE2L2 pathway"/>
</dbReference>
<dbReference type="Reactome" id="R-BTA-9762114">
    <property type="pathway name" value="GSK3B and BTRC:CUL1-mediated-degradation of NFE2L2"/>
</dbReference>
<dbReference type="Reactome" id="R-BTA-983168">
    <property type="pathway name" value="Antigen processing: Ubiquitination &amp; Proteasome degradation"/>
</dbReference>
<dbReference type="Reactome" id="R-BTA-9907900">
    <property type="pathway name" value="Proteasome assembly"/>
</dbReference>
<dbReference type="EvolutionaryTrace" id="P33672"/>
<dbReference type="Proteomes" id="UP000009136">
    <property type="component" value="Chromosome 19"/>
</dbReference>
<dbReference type="Bgee" id="ENSBTAG00000003830">
    <property type="expression patterns" value="Expressed in oocyte and 104 other cell types or tissues"/>
</dbReference>
<dbReference type="GO" id="GO:0005829">
    <property type="term" value="C:cytosol"/>
    <property type="evidence" value="ECO:0000318"/>
    <property type="project" value="GO_Central"/>
</dbReference>
<dbReference type="GO" id="GO:0005634">
    <property type="term" value="C:nucleus"/>
    <property type="evidence" value="ECO:0000318"/>
    <property type="project" value="GO_Central"/>
</dbReference>
<dbReference type="GO" id="GO:0005839">
    <property type="term" value="C:proteasome core complex"/>
    <property type="evidence" value="ECO:0000250"/>
    <property type="project" value="UniProtKB"/>
</dbReference>
<dbReference type="GO" id="GO:0019774">
    <property type="term" value="C:proteasome core complex, beta-subunit complex"/>
    <property type="evidence" value="ECO:0000250"/>
    <property type="project" value="UniProtKB"/>
</dbReference>
<dbReference type="GO" id="GO:0043161">
    <property type="term" value="P:proteasome-mediated ubiquitin-dependent protein catabolic process"/>
    <property type="evidence" value="ECO:0000318"/>
    <property type="project" value="GO_Central"/>
</dbReference>
<dbReference type="CDD" id="cd03759">
    <property type="entry name" value="proteasome_beta_type_3"/>
    <property type="match status" value="1"/>
</dbReference>
<dbReference type="FunFam" id="3.60.20.10:FF:000003">
    <property type="entry name" value="Proteasome subunit beta type-3"/>
    <property type="match status" value="1"/>
</dbReference>
<dbReference type="Gene3D" id="3.60.20.10">
    <property type="entry name" value="Glutamine Phosphoribosylpyrophosphate, subunit 1, domain 1"/>
    <property type="match status" value="1"/>
</dbReference>
<dbReference type="InterPro" id="IPR029055">
    <property type="entry name" value="Ntn_hydrolases_N"/>
</dbReference>
<dbReference type="InterPro" id="IPR033811">
    <property type="entry name" value="Proteasome_beta_3"/>
</dbReference>
<dbReference type="InterPro" id="IPR016050">
    <property type="entry name" value="Proteasome_bsu_CS"/>
</dbReference>
<dbReference type="InterPro" id="IPR001353">
    <property type="entry name" value="Proteasome_sua/b"/>
</dbReference>
<dbReference type="InterPro" id="IPR023333">
    <property type="entry name" value="Proteasome_suB-type"/>
</dbReference>
<dbReference type="PANTHER" id="PTHR32194">
    <property type="entry name" value="METALLOPROTEASE TLDD"/>
    <property type="match status" value="1"/>
</dbReference>
<dbReference type="PANTHER" id="PTHR32194:SF10">
    <property type="entry name" value="PROTEASOME SUBUNIT BETA TYPE-3"/>
    <property type="match status" value="1"/>
</dbReference>
<dbReference type="Pfam" id="PF00227">
    <property type="entry name" value="Proteasome"/>
    <property type="match status" value="1"/>
</dbReference>
<dbReference type="SUPFAM" id="SSF56235">
    <property type="entry name" value="N-terminal nucleophile aminohydrolases (Ntn hydrolases)"/>
    <property type="match status" value="1"/>
</dbReference>
<dbReference type="PROSITE" id="PS00854">
    <property type="entry name" value="PROTEASOME_BETA_1"/>
    <property type="match status" value="1"/>
</dbReference>
<dbReference type="PROSITE" id="PS51476">
    <property type="entry name" value="PROTEASOME_BETA_2"/>
    <property type="match status" value="1"/>
</dbReference>
<gene>
    <name type="primary">PSMB3</name>
</gene>